<sequence>MPTIQQLVRKGRQAKTTKTKTPALKGSPQRRGVCTRVYTTTPKKPNSALRKVARVKLSSQIEVTAYIPGVGHNLQEHSIVLVRGGRVKDLPGVRYKIVRGSLDTQGVRNRKQARSRYGAKKEKS</sequence>
<gene>
    <name evidence="2" type="primary">rpsL</name>
    <name type="ordered locus">Strop_3928</name>
</gene>
<accession>A4XBQ1</accession>
<dbReference type="EMBL" id="CP000667">
    <property type="protein sequence ID" value="ABP56358.1"/>
    <property type="molecule type" value="Genomic_DNA"/>
</dbReference>
<dbReference type="RefSeq" id="WP_007465318.1">
    <property type="nucleotide sequence ID" value="NC_009380.1"/>
</dbReference>
<dbReference type="SMR" id="A4XBQ1"/>
<dbReference type="STRING" id="369723.Strop_3928"/>
<dbReference type="GeneID" id="95368537"/>
<dbReference type="KEGG" id="stp:Strop_3928"/>
<dbReference type="eggNOG" id="COG0048">
    <property type="taxonomic scope" value="Bacteria"/>
</dbReference>
<dbReference type="HOGENOM" id="CLU_104295_1_2_11"/>
<dbReference type="Proteomes" id="UP000000235">
    <property type="component" value="Chromosome"/>
</dbReference>
<dbReference type="GO" id="GO:0015935">
    <property type="term" value="C:small ribosomal subunit"/>
    <property type="evidence" value="ECO:0007669"/>
    <property type="project" value="InterPro"/>
</dbReference>
<dbReference type="GO" id="GO:0019843">
    <property type="term" value="F:rRNA binding"/>
    <property type="evidence" value="ECO:0007669"/>
    <property type="project" value="UniProtKB-UniRule"/>
</dbReference>
<dbReference type="GO" id="GO:0003735">
    <property type="term" value="F:structural constituent of ribosome"/>
    <property type="evidence" value="ECO:0007669"/>
    <property type="project" value="InterPro"/>
</dbReference>
<dbReference type="GO" id="GO:0000049">
    <property type="term" value="F:tRNA binding"/>
    <property type="evidence" value="ECO:0007669"/>
    <property type="project" value="UniProtKB-UniRule"/>
</dbReference>
<dbReference type="GO" id="GO:0006412">
    <property type="term" value="P:translation"/>
    <property type="evidence" value="ECO:0007669"/>
    <property type="project" value="UniProtKB-UniRule"/>
</dbReference>
<dbReference type="CDD" id="cd03368">
    <property type="entry name" value="Ribosomal_S12"/>
    <property type="match status" value="1"/>
</dbReference>
<dbReference type="FunFam" id="2.40.50.140:FF:000001">
    <property type="entry name" value="30S ribosomal protein S12"/>
    <property type="match status" value="1"/>
</dbReference>
<dbReference type="Gene3D" id="2.40.50.140">
    <property type="entry name" value="Nucleic acid-binding proteins"/>
    <property type="match status" value="1"/>
</dbReference>
<dbReference type="HAMAP" id="MF_00403_B">
    <property type="entry name" value="Ribosomal_uS12_B"/>
    <property type="match status" value="1"/>
</dbReference>
<dbReference type="InterPro" id="IPR012340">
    <property type="entry name" value="NA-bd_OB-fold"/>
</dbReference>
<dbReference type="InterPro" id="IPR006032">
    <property type="entry name" value="Ribosomal_uS12"/>
</dbReference>
<dbReference type="InterPro" id="IPR005679">
    <property type="entry name" value="Ribosomal_uS12_bac"/>
</dbReference>
<dbReference type="NCBIfam" id="TIGR00981">
    <property type="entry name" value="rpsL_bact"/>
    <property type="match status" value="1"/>
</dbReference>
<dbReference type="PANTHER" id="PTHR11652">
    <property type="entry name" value="30S RIBOSOMAL PROTEIN S12 FAMILY MEMBER"/>
    <property type="match status" value="1"/>
</dbReference>
<dbReference type="Pfam" id="PF00164">
    <property type="entry name" value="Ribosom_S12_S23"/>
    <property type="match status" value="1"/>
</dbReference>
<dbReference type="PIRSF" id="PIRSF002133">
    <property type="entry name" value="Ribosomal_S12/S23"/>
    <property type="match status" value="1"/>
</dbReference>
<dbReference type="PRINTS" id="PR01034">
    <property type="entry name" value="RIBOSOMALS12"/>
</dbReference>
<dbReference type="SUPFAM" id="SSF50249">
    <property type="entry name" value="Nucleic acid-binding proteins"/>
    <property type="match status" value="1"/>
</dbReference>
<dbReference type="PROSITE" id="PS00055">
    <property type="entry name" value="RIBOSOMAL_S12"/>
    <property type="match status" value="1"/>
</dbReference>
<keyword id="KW-0488">Methylation</keyword>
<keyword id="KW-1185">Reference proteome</keyword>
<keyword id="KW-0687">Ribonucleoprotein</keyword>
<keyword id="KW-0689">Ribosomal protein</keyword>
<keyword id="KW-0694">RNA-binding</keyword>
<keyword id="KW-0699">rRNA-binding</keyword>
<keyword id="KW-0820">tRNA-binding</keyword>
<feature type="chain" id="PRO_1000080413" description="Small ribosomal subunit protein uS12">
    <location>
        <begin position="1"/>
        <end position="124"/>
    </location>
</feature>
<feature type="region of interest" description="Disordered" evidence="3">
    <location>
        <begin position="1"/>
        <end position="32"/>
    </location>
</feature>
<feature type="region of interest" description="Disordered" evidence="3">
    <location>
        <begin position="105"/>
        <end position="124"/>
    </location>
</feature>
<feature type="compositionally biased region" description="Basic residues" evidence="3">
    <location>
        <begin position="9"/>
        <end position="18"/>
    </location>
</feature>
<feature type="compositionally biased region" description="Basic residues" evidence="3">
    <location>
        <begin position="108"/>
        <end position="118"/>
    </location>
</feature>
<feature type="modified residue" description="3-methylthioaspartic acid" evidence="1">
    <location>
        <position position="89"/>
    </location>
</feature>
<comment type="function">
    <text evidence="2">With S4 and S5 plays an important role in translational accuracy.</text>
</comment>
<comment type="function">
    <text evidence="2">Interacts with and stabilizes bases of the 16S rRNA that are involved in tRNA selection in the A site and with the mRNA backbone. Located at the interface of the 30S and 50S subunits, it traverses the body of the 30S subunit contacting proteins on the other side and probably holding the rRNA structure together. The combined cluster of proteins S8, S12 and S17 appears to hold together the shoulder and platform of the 30S subunit.</text>
</comment>
<comment type="subunit">
    <text evidence="2">Part of the 30S ribosomal subunit. Contacts proteins S8 and S17. May interact with IF1 in the 30S initiation complex.</text>
</comment>
<comment type="similarity">
    <text evidence="2">Belongs to the universal ribosomal protein uS12 family.</text>
</comment>
<organism>
    <name type="scientific">Salinispora tropica (strain ATCC BAA-916 / DSM 44818 / JCM 13857 / NBRC 105044 / CNB-440)</name>
    <dbReference type="NCBI Taxonomy" id="369723"/>
    <lineage>
        <taxon>Bacteria</taxon>
        <taxon>Bacillati</taxon>
        <taxon>Actinomycetota</taxon>
        <taxon>Actinomycetes</taxon>
        <taxon>Micromonosporales</taxon>
        <taxon>Micromonosporaceae</taxon>
        <taxon>Salinispora</taxon>
    </lineage>
</organism>
<reference key="1">
    <citation type="journal article" date="2007" name="Proc. Natl. Acad. Sci. U.S.A.">
        <title>Genome sequencing reveals complex secondary metabolome in the marine actinomycete Salinispora tropica.</title>
        <authorList>
            <person name="Udwary D.W."/>
            <person name="Zeigler L."/>
            <person name="Asolkar R.N."/>
            <person name="Singan V."/>
            <person name="Lapidus A."/>
            <person name="Fenical W."/>
            <person name="Jensen P.R."/>
            <person name="Moore B.S."/>
        </authorList>
    </citation>
    <scope>NUCLEOTIDE SEQUENCE [LARGE SCALE GENOMIC DNA]</scope>
    <source>
        <strain>ATCC BAA-916 / DSM 44818 / JCM 13857 / NBRC 105044 / CNB-440</strain>
    </source>
</reference>
<proteinExistence type="inferred from homology"/>
<name>RS12_SALTO</name>
<evidence type="ECO:0000250" key="1"/>
<evidence type="ECO:0000255" key="2">
    <source>
        <dbReference type="HAMAP-Rule" id="MF_00403"/>
    </source>
</evidence>
<evidence type="ECO:0000256" key="3">
    <source>
        <dbReference type="SAM" id="MobiDB-lite"/>
    </source>
</evidence>
<evidence type="ECO:0000305" key="4"/>
<protein>
    <recommendedName>
        <fullName evidence="2">Small ribosomal subunit protein uS12</fullName>
    </recommendedName>
    <alternativeName>
        <fullName evidence="4">30S ribosomal protein S12</fullName>
    </alternativeName>
</protein>